<comment type="function">
    <text evidence="1">Involved in the biosynthesis of osmoregulated periplasmic glucans (OPGs).</text>
</comment>
<comment type="pathway">
    <text evidence="1">Glycan metabolism; osmoregulated periplasmic glucan (OPG) biosynthesis.</text>
</comment>
<comment type="subcellular location">
    <subcellularLocation>
        <location evidence="1">Periplasm</location>
    </subcellularLocation>
</comment>
<comment type="similarity">
    <text evidence="1">Belongs to the OpgD/OpgG family.</text>
</comment>
<sequence length="511" mass="57882">MMKMRWLSAAVMLTLYTSSSWAFSIDDVAKQAQSLAGKGYEAPKSNLPSVFRDMKYADYQQIQFNHDKAYWNNLKTPFKLEFYHQGMYFDTPVKINEVTATAVKRIKYSPDYFTFGDVQHDKDTVKDLGFAGFKVLYPINSKDKNDEIVSMLGASYFRVIGAGQVYGLSARGLAIDTALPSGEEFPRFKEFWIERPKPTDKRLTIYALLDSPRATGAYKFVVMPGRDTVVDVQSKIYLRDKVGKLGVAPLTSMFLFGPNQPSPANNYRPELHDSNGLSIHAGNGEWIWRPLNNPKHLAVSSFSMENPQGFGLLQRGRDFSRFEDLDDRYDLRPSAWVTPKGEWGKGSVELVEIPTNDETNDNIVAYWTPDQLPEPGKEMNFKYTITFSRDEDKLHAPDNAWVQQTRRSTGDVKQSNLIRQPDGTIAFVVDFTGAEMKKLPEDTPVTAQTSIGDNGEIVESTVRYNPVTKGWRLVMRVKVKDAKKTTEMRAALVNADQTLSETWSYQLPANE</sequence>
<keyword id="KW-0574">Periplasm</keyword>
<keyword id="KW-0732">Signal</keyword>
<name>OPGG_ECOHS</name>
<gene>
    <name evidence="1" type="primary">mdoG</name>
    <name evidence="1" type="synonym">opgG</name>
    <name type="ordered locus">EcHS_A1170</name>
</gene>
<protein>
    <recommendedName>
        <fullName evidence="1">Glucans biosynthesis protein G</fullName>
    </recommendedName>
</protein>
<dbReference type="EMBL" id="CP000802">
    <property type="protein sequence ID" value="ABV05509.1"/>
    <property type="molecule type" value="Genomic_DNA"/>
</dbReference>
<dbReference type="RefSeq" id="WP_001300662.1">
    <property type="nucleotide sequence ID" value="NC_009800.1"/>
</dbReference>
<dbReference type="SMR" id="A7ZZ05"/>
<dbReference type="GeneID" id="93776366"/>
<dbReference type="KEGG" id="ecx:EcHS_A1170"/>
<dbReference type="HOGENOM" id="CLU_023403_2_0_6"/>
<dbReference type="UniPathway" id="UPA00637"/>
<dbReference type="GO" id="GO:0030288">
    <property type="term" value="C:outer membrane-bounded periplasmic space"/>
    <property type="evidence" value="ECO:0007669"/>
    <property type="project" value="TreeGrafter"/>
</dbReference>
<dbReference type="GO" id="GO:0030246">
    <property type="term" value="F:carbohydrate binding"/>
    <property type="evidence" value="ECO:0007669"/>
    <property type="project" value="InterPro"/>
</dbReference>
<dbReference type="GO" id="GO:0003824">
    <property type="term" value="F:catalytic activity"/>
    <property type="evidence" value="ECO:0007669"/>
    <property type="project" value="InterPro"/>
</dbReference>
<dbReference type="GO" id="GO:0051274">
    <property type="term" value="P:beta-glucan biosynthetic process"/>
    <property type="evidence" value="ECO:0007669"/>
    <property type="project" value="TreeGrafter"/>
</dbReference>
<dbReference type="FunFam" id="2.60.40.10:FF:000294">
    <property type="entry name" value="Glucans biosynthesis protein G"/>
    <property type="match status" value="1"/>
</dbReference>
<dbReference type="FunFam" id="2.70.98.10:FF:000001">
    <property type="entry name" value="Glucans biosynthesis protein G"/>
    <property type="match status" value="1"/>
</dbReference>
<dbReference type="Gene3D" id="2.70.98.10">
    <property type="match status" value="1"/>
</dbReference>
<dbReference type="Gene3D" id="2.60.40.10">
    <property type="entry name" value="Immunoglobulins"/>
    <property type="match status" value="1"/>
</dbReference>
<dbReference type="HAMAP" id="MF_01069">
    <property type="entry name" value="MdoG_OpgG"/>
    <property type="match status" value="1"/>
</dbReference>
<dbReference type="InterPro" id="IPR011013">
    <property type="entry name" value="Gal_mutarotase_sf_dom"/>
</dbReference>
<dbReference type="InterPro" id="IPR014718">
    <property type="entry name" value="GH-type_carb-bd"/>
</dbReference>
<dbReference type="InterPro" id="IPR014438">
    <property type="entry name" value="Glucan_biosyn_MdoG/MdoD"/>
</dbReference>
<dbReference type="InterPro" id="IPR007444">
    <property type="entry name" value="Glucan_biosyn_MdoG_C"/>
</dbReference>
<dbReference type="InterPro" id="IPR013783">
    <property type="entry name" value="Ig-like_fold"/>
</dbReference>
<dbReference type="InterPro" id="IPR014756">
    <property type="entry name" value="Ig_E-set"/>
</dbReference>
<dbReference type="InterPro" id="IPR023704">
    <property type="entry name" value="MdoG_OpgG"/>
</dbReference>
<dbReference type="PANTHER" id="PTHR30504">
    <property type="entry name" value="GLUCANS BIOSYNTHESIS PROTEIN"/>
    <property type="match status" value="1"/>
</dbReference>
<dbReference type="PANTHER" id="PTHR30504:SF4">
    <property type="entry name" value="GLUCANS BIOSYNTHESIS PROTEIN G"/>
    <property type="match status" value="1"/>
</dbReference>
<dbReference type="Pfam" id="PF04349">
    <property type="entry name" value="MdoG"/>
    <property type="match status" value="1"/>
</dbReference>
<dbReference type="PIRSF" id="PIRSF006281">
    <property type="entry name" value="MdoG"/>
    <property type="match status" value="1"/>
</dbReference>
<dbReference type="SUPFAM" id="SSF81296">
    <property type="entry name" value="E set domains"/>
    <property type="match status" value="1"/>
</dbReference>
<dbReference type="SUPFAM" id="SSF74650">
    <property type="entry name" value="Galactose mutarotase-like"/>
    <property type="match status" value="1"/>
</dbReference>
<proteinExistence type="inferred from homology"/>
<organism>
    <name type="scientific">Escherichia coli O9:H4 (strain HS)</name>
    <dbReference type="NCBI Taxonomy" id="331112"/>
    <lineage>
        <taxon>Bacteria</taxon>
        <taxon>Pseudomonadati</taxon>
        <taxon>Pseudomonadota</taxon>
        <taxon>Gammaproteobacteria</taxon>
        <taxon>Enterobacterales</taxon>
        <taxon>Enterobacteriaceae</taxon>
        <taxon>Escherichia</taxon>
    </lineage>
</organism>
<feature type="signal peptide" evidence="1">
    <location>
        <begin position="1"/>
        <end position="22"/>
    </location>
</feature>
<feature type="chain" id="PRO_1000064557" description="Glucans biosynthesis protein G">
    <location>
        <begin position="23"/>
        <end position="511"/>
    </location>
</feature>
<accession>A7ZZ05</accession>
<reference key="1">
    <citation type="journal article" date="2008" name="J. Bacteriol.">
        <title>The pangenome structure of Escherichia coli: comparative genomic analysis of E. coli commensal and pathogenic isolates.</title>
        <authorList>
            <person name="Rasko D.A."/>
            <person name="Rosovitz M.J."/>
            <person name="Myers G.S.A."/>
            <person name="Mongodin E.F."/>
            <person name="Fricke W.F."/>
            <person name="Gajer P."/>
            <person name="Crabtree J."/>
            <person name="Sebaihia M."/>
            <person name="Thomson N.R."/>
            <person name="Chaudhuri R."/>
            <person name="Henderson I.R."/>
            <person name="Sperandio V."/>
            <person name="Ravel J."/>
        </authorList>
    </citation>
    <scope>NUCLEOTIDE SEQUENCE [LARGE SCALE GENOMIC DNA]</scope>
    <source>
        <strain>HS</strain>
    </source>
</reference>
<evidence type="ECO:0000255" key="1">
    <source>
        <dbReference type="HAMAP-Rule" id="MF_01069"/>
    </source>
</evidence>